<comment type="function">
    <text evidence="2 3">Siroheme synthase involved in methionine biosynthesis.</text>
</comment>
<comment type="catalytic activity">
    <reaction evidence="2">
        <text>uroporphyrinogen III + 2 S-adenosyl-L-methionine = precorrin-2 + 2 S-adenosyl-L-homocysteine + H(+)</text>
        <dbReference type="Rhea" id="RHEA:32459"/>
        <dbReference type="ChEBI" id="CHEBI:15378"/>
        <dbReference type="ChEBI" id="CHEBI:57308"/>
        <dbReference type="ChEBI" id="CHEBI:57856"/>
        <dbReference type="ChEBI" id="CHEBI:58827"/>
        <dbReference type="ChEBI" id="CHEBI:59789"/>
        <dbReference type="EC" id="2.1.1.107"/>
    </reaction>
</comment>
<comment type="similarity">
    <text evidence="5">Belongs to the precorrin methyltransferase family.</text>
</comment>
<protein>
    <recommendedName>
        <fullName evidence="4">Uroporphyrinogen-III C-methyltransferase</fullName>
        <shortName evidence="4">Urogen III methylase</shortName>
        <ecNumber evidence="2">2.1.1.107</ecNumber>
    </recommendedName>
    <alternativeName>
        <fullName>SUMT</fullName>
    </alternativeName>
    <alternativeName>
        <fullName>Uroporphyrinogen III methylase</fullName>
        <shortName>UROM</shortName>
    </alternativeName>
</protein>
<sequence>MVRDLVTLPSSLPLITAGFATDQVHLLIGTGSTDSVSVCKNRIHSILNAGGNPIVVNPSSPSHTKQLQLEFGKFAKFEIVEREFRLSDLTTLGRVLVCKVVDRVFVDLPITQSRLCEEIFWQCQKLRIPINTFHKPEFSTFNMIPTWVDPKGSGLQISVTTNGNGYILANRIKRDIISHLPPNISEVVINMGYLKDRIINEDHKALLEEKYYQTDMSLPGFGYGLDEDGWESHKFNKLIREFEMTSREQRLKRTRWLSQIMEYYPMNKLSDIKLEDFETSSSPNKKTKQETVTEGVVPPTDENIENGTKQLQLSEVKKEEGPKKLGKISLVGSGPGSVSMLTIGALQEIKSADIILADKLVPQAILDLIPPKTETFIAKKFPGNAERAQQELLAKGLESLDNGLKVVRLKQGDPYIFGRGGEEFNFFKDHGYIPVVLPGISSSLACTVLAQIPATQRDIADQVLICTGTGRKGALPIIPEFVESRTTVFLMALHRANVLITGLLKHGWDGDVPAAIVERGSCPDQRVTRTLLKWVPEVVEEIGSRPPGVLVVGKAVNALVEKDLINFDESRKFVIDEGFREFEVDVDSLFKLY</sequence>
<organism>
    <name type="scientific">Saccharomyces cerevisiae (strain ATCC 204508 / S288c)</name>
    <name type="common">Baker's yeast</name>
    <dbReference type="NCBI Taxonomy" id="559292"/>
    <lineage>
        <taxon>Eukaryota</taxon>
        <taxon>Fungi</taxon>
        <taxon>Dikarya</taxon>
        <taxon>Ascomycota</taxon>
        <taxon>Saccharomycotina</taxon>
        <taxon>Saccharomycetes</taxon>
        <taxon>Saccharomycetales</taxon>
        <taxon>Saccharomycetaceae</taxon>
        <taxon>Saccharomyces</taxon>
    </lineage>
</organism>
<evidence type="ECO:0000256" key="1">
    <source>
        <dbReference type="SAM" id="MobiDB-lite"/>
    </source>
</evidence>
<evidence type="ECO:0000269" key="2">
    <source>
    </source>
</evidence>
<evidence type="ECO:0000269" key="3">
    <source>
    </source>
</evidence>
<evidence type="ECO:0000303" key="4">
    <source>
    </source>
</evidence>
<evidence type="ECO:0000305" key="5"/>
<keyword id="KW-0028">Amino-acid biosynthesis</keyword>
<keyword id="KW-0486">Methionine biosynthesis</keyword>
<keyword id="KW-0489">Methyltransferase</keyword>
<keyword id="KW-0627">Porphyrin biosynthesis</keyword>
<keyword id="KW-1185">Reference proteome</keyword>
<keyword id="KW-0949">S-adenosyl-L-methionine</keyword>
<keyword id="KW-0808">Transferase</keyword>
<accession>P36150</accession>
<accession>D6VXD0</accession>
<reference key="1">
    <citation type="journal article" date="1994" name="Nature">
        <title>Complete DNA sequence of yeast chromosome XI.</title>
        <authorList>
            <person name="Dujon B."/>
            <person name="Alexandraki D."/>
            <person name="Andre B."/>
            <person name="Ansorge W."/>
            <person name="Baladron V."/>
            <person name="Ballesta J.P.G."/>
            <person name="Banrevi A."/>
            <person name="Bolle P.-A."/>
            <person name="Bolotin-Fukuhara M."/>
            <person name="Bossier P."/>
            <person name="Bou G."/>
            <person name="Boyer J."/>
            <person name="Buitrago M.J."/>
            <person name="Cheret G."/>
            <person name="Colleaux L."/>
            <person name="Daignan-Fornier B."/>
            <person name="del Rey F."/>
            <person name="Dion C."/>
            <person name="Domdey H."/>
            <person name="Duesterhoeft A."/>
            <person name="Duesterhus S."/>
            <person name="Entian K.-D."/>
            <person name="Erfle H."/>
            <person name="Esteban P.F."/>
            <person name="Feldmann H."/>
            <person name="Fernandes L."/>
            <person name="Fobo G.M."/>
            <person name="Fritz C."/>
            <person name="Fukuhara H."/>
            <person name="Gabel C."/>
            <person name="Gaillon L."/>
            <person name="Garcia-Cantalejo J.M."/>
            <person name="Garcia-Ramirez J.J."/>
            <person name="Gent M.E."/>
            <person name="Ghazvini M."/>
            <person name="Goffeau A."/>
            <person name="Gonzalez A."/>
            <person name="Grothues D."/>
            <person name="Guerreiro P."/>
            <person name="Hegemann J.H."/>
            <person name="Hewitt N."/>
            <person name="Hilger F."/>
            <person name="Hollenberg C.P."/>
            <person name="Horaitis O."/>
            <person name="Indge K.J."/>
            <person name="Jacquier A."/>
            <person name="James C.M."/>
            <person name="Jauniaux J.-C."/>
            <person name="Jimenez A."/>
            <person name="Keuchel H."/>
            <person name="Kirchrath L."/>
            <person name="Kleine K."/>
            <person name="Koetter P."/>
            <person name="Legrain P."/>
            <person name="Liebl S."/>
            <person name="Louis E.J."/>
            <person name="Maia e Silva A."/>
            <person name="Marck C."/>
            <person name="Monnier A.-L."/>
            <person name="Moestl D."/>
            <person name="Mueller S."/>
            <person name="Obermaier B."/>
            <person name="Oliver S.G."/>
            <person name="Pallier C."/>
            <person name="Pascolo S."/>
            <person name="Pfeiffer F."/>
            <person name="Philippsen P."/>
            <person name="Planta R.J."/>
            <person name="Pohl F.M."/>
            <person name="Pohl T.M."/>
            <person name="Poehlmann R."/>
            <person name="Portetelle D."/>
            <person name="Purnelle B."/>
            <person name="Puzos V."/>
            <person name="Ramezani Rad M."/>
            <person name="Rasmussen S.W."/>
            <person name="Remacha M.A."/>
            <person name="Revuelta J.L."/>
            <person name="Richard G.-F."/>
            <person name="Rieger M."/>
            <person name="Rodrigues-Pousada C."/>
            <person name="Rose M."/>
            <person name="Rupp T."/>
            <person name="Santos M.A."/>
            <person name="Schwager C."/>
            <person name="Sensen C."/>
            <person name="Skala J."/>
            <person name="Soares H."/>
            <person name="Sor F."/>
            <person name="Stegemann J."/>
            <person name="Tettelin H."/>
            <person name="Thierry A."/>
            <person name="Tzermia M."/>
            <person name="Urrestarazu L.A."/>
            <person name="van Dyck L."/>
            <person name="van Vliet-Reedijk J.C."/>
            <person name="Valens M."/>
            <person name="Vandenbol M."/>
            <person name="Vilela C."/>
            <person name="Vissers S."/>
            <person name="von Wettstein D."/>
            <person name="Voss H."/>
            <person name="Wiemann S."/>
            <person name="Xu G."/>
            <person name="Zimmermann J."/>
            <person name="Haasemann M."/>
            <person name="Becker I."/>
            <person name="Mewes H.-W."/>
        </authorList>
    </citation>
    <scope>NUCLEOTIDE SEQUENCE [LARGE SCALE GENOMIC DNA]</scope>
    <source>
        <strain>ATCC 204508 / S288c</strain>
    </source>
</reference>
<reference key="2">
    <citation type="journal article" date="2014" name="G3 (Bethesda)">
        <title>The reference genome sequence of Saccharomyces cerevisiae: Then and now.</title>
        <authorList>
            <person name="Engel S.R."/>
            <person name="Dietrich F.S."/>
            <person name="Fisk D.G."/>
            <person name="Binkley G."/>
            <person name="Balakrishnan R."/>
            <person name="Costanzo M.C."/>
            <person name="Dwight S.S."/>
            <person name="Hitz B.C."/>
            <person name="Karra K."/>
            <person name="Nash R.S."/>
            <person name="Weng S."/>
            <person name="Wong E.D."/>
            <person name="Lloyd P."/>
            <person name="Skrzypek M.S."/>
            <person name="Miyasato S.R."/>
            <person name="Simison M."/>
            <person name="Cherry J.M."/>
        </authorList>
    </citation>
    <scope>GENOME REANNOTATION</scope>
    <source>
        <strain>ATCC 204508 / S288c</strain>
    </source>
</reference>
<reference key="3">
    <citation type="journal article" date="1997" name="FEBS Lett.">
        <title>Siroheme biosynthesis in Saccharomyces cerevisiae requires the products of both the MET1 and MET8 genes.</title>
        <authorList>
            <person name="Hansen J."/>
            <person name="Muldbjerg M."/>
            <person name="Cherest H."/>
            <person name="Surdin-Kerjan Y."/>
        </authorList>
    </citation>
    <scope>FUNCTION</scope>
</reference>
<reference key="4">
    <citation type="journal article" date="1999" name="Biochem. J.">
        <title>The role of Saccharomyces cerevisiae Met1p and Met8p in sirohaem and cobalamin biosynthesis.</title>
        <authorList>
            <person name="Raux E."/>
            <person name="McVeigh T."/>
            <person name="Peters S.E."/>
            <person name="Leustek T."/>
            <person name="Warren M.J."/>
        </authorList>
    </citation>
    <scope>FUNCTION</scope>
    <scope>CATALYTIC ACTIVITY</scope>
</reference>
<reference key="5">
    <citation type="journal article" date="2007" name="J. Proteome Res.">
        <title>Large-scale phosphorylation analysis of alpha-factor-arrested Saccharomyces cerevisiae.</title>
        <authorList>
            <person name="Li X."/>
            <person name="Gerber S.A."/>
            <person name="Rudner A.D."/>
            <person name="Beausoleil S.A."/>
            <person name="Haas W."/>
            <person name="Villen J."/>
            <person name="Elias J.E."/>
            <person name="Gygi S.P."/>
        </authorList>
    </citation>
    <scope>IDENTIFICATION BY MASS SPECTROMETRY [LARGE SCALE ANALYSIS]</scope>
    <source>
        <strain>ADR376</strain>
    </source>
</reference>
<reference key="6">
    <citation type="journal article" date="2009" name="Science">
        <title>Global analysis of Cdk1 substrate phosphorylation sites provides insights into evolution.</title>
        <authorList>
            <person name="Holt L.J."/>
            <person name="Tuch B.B."/>
            <person name="Villen J."/>
            <person name="Johnson A.D."/>
            <person name="Gygi S.P."/>
            <person name="Morgan D.O."/>
        </authorList>
    </citation>
    <scope>IDENTIFICATION BY MASS SPECTROMETRY [LARGE SCALE ANALYSIS]</scope>
</reference>
<dbReference type="EC" id="2.1.1.107" evidence="2"/>
<dbReference type="EMBL" id="Z28294">
    <property type="protein sequence ID" value="CAA82148.1"/>
    <property type="molecule type" value="Genomic_DNA"/>
</dbReference>
<dbReference type="EMBL" id="BK006944">
    <property type="protein sequence ID" value="DAA09220.1"/>
    <property type="molecule type" value="Genomic_DNA"/>
</dbReference>
<dbReference type="PIR" id="S38145">
    <property type="entry name" value="S38145"/>
</dbReference>
<dbReference type="RefSeq" id="NP_012995.3">
    <property type="nucleotide sequence ID" value="NM_001179859.3"/>
</dbReference>
<dbReference type="SMR" id="P36150"/>
<dbReference type="BioGRID" id="34200">
    <property type="interactions" value="42"/>
</dbReference>
<dbReference type="DIP" id="DIP-4843N"/>
<dbReference type="FunCoup" id="P36150">
    <property type="interactions" value="604"/>
</dbReference>
<dbReference type="IntAct" id="P36150">
    <property type="interactions" value="2"/>
</dbReference>
<dbReference type="MINT" id="P36150"/>
<dbReference type="STRING" id="4932.YKR069W"/>
<dbReference type="iPTMnet" id="P36150"/>
<dbReference type="PaxDb" id="4932-YKR069W"/>
<dbReference type="PeptideAtlas" id="P36150"/>
<dbReference type="EnsemblFungi" id="YKR069W_mRNA">
    <property type="protein sequence ID" value="YKR069W"/>
    <property type="gene ID" value="YKR069W"/>
</dbReference>
<dbReference type="GeneID" id="853943"/>
<dbReference type="KEGG" id="sce:YKR069W"/>
<dbReference type="AGR" id="SGD:S000001777"/>
<dbReference type="SGD" id="S000001777">
    <property type="gene designation" value="MET1"/>
</dbReference>
<dbReference type="VEuPathDB" id="FungiDB:YKR069W"/>
<dbReference type="eggNOG" id="KOG1527">
    <property type="taxonomic scope" value="Eukaryota"/>
</dbReference>
<dbReference type="HOGENOM" id="CLU_011276_2_2_1"/>
<dbReference type="InParanoid" id="P36150"/>
<dbReference type="OMA" id="TPCAIVE"/>
<dbReference type="OrthoDB" id="508204at2759"/>
<dbReference type="BioCyc" id="MetaCyc:G3O-32035-MONOMER"/>
<dbReference type="BioCyc" id="YEAST:G3O-32035-MONOMER"/>
<dbReference type="BioGRID-ORCS" id="853943">
    <property type="hits" value="0 hits in 10 CRISPR screens"/>
</dbReference>
<dbReference type="PRO" id="PR:P36150"/>
<dbReference type="Proteomes" id="UP000002311">
    <property type="component" value="Chromosome XI"/>
</dbReference>
<dbReference type="RNAct" id="P36150">
    <property type="molecule type" value="protein"/>
</dbReference>
<dbReference type="GO" id="GO:0005634">
    <property type="term" value="C:nucleus"/>
    <property type="evidence" value="ECO:0007005"/>
    <property type="project" value="SGD"/>
</dbReference>
<dbReference type="GO" id="GO:0004851">
    <property type="term" value="F:uroporphyrin-III C-methyltransferase activity"/>
    <property type="evidence" value="ECO:0000314"/>
    <property type="project" value="SGD"/>
</dbReference>
<dbReference type="GO" id="GO:0009086">
    <property type="term" value="P:methionine biosynthetic process"/>
    <property type="evidence" value="ECO:0007669"/>
    <property type="project" value="UniProtKB-KW"/>
</dbReference>
<dbReference type="GO" id="GO:0032259">
    <property type="term" value="P:methylation"/>
    <property type="evidence" value="ECO:0007669"/>
    <property type="project" value="UniProtKB-KW"/>
</dbReference>
<dbReference type="GO" id="GO:0019354">
    <property type="term" value="P:siroheme biosynthetic process"/>
    <property type="evidence" value="ECO:0000315"/>
    <property type="project" value="SGD"/>
</dbReference>
<dbReference type="GO" id="GO:0000103">
    <property type="term" value="P:sulfate assimilation"/>
    <property type="evidence" value="ECO:0007669"/>
    <property type="project" value="InterPro"/>
</dbReference>
<dbReference type="CDD" id="cd11642">
    <property type="entry name" value="SUMT"/>
    <property type="match status" value="1"/>
</dbReference>
<dbReference type="FunFam" id="3.40.1010.10:FF:000006">
    <property type="entry name" value="Siroheme synthase, putative"/>
    <property type="match status" value="1"/>
</dbReference>
<dbReference type="FunFam" id="3.30.950.10:FF:000005">
    <property type="entry name" value="Uroporphyrin-III c-methyltransferase, putative"/>
    <property type="match status" value="1"/>
</dbReference>
<dbReference type="FunFam" id="3.40.50.720:FF:000895">
    <property type="entry name" value="Uroporphyrinogen-III C-methyltransferase"/>
    <property type="match status" value="1"/>
</dbReference>
<dbReference type="Gene3D" id="3.40.1010.10">
    <property type="entry name" value="Cobalt-precorrin-4 Transmethylase, Domain 1"/>
    <property type="match status" value="1"/>
</dbReference>
<dbReference type="Gene3D" id="3.30.950.10">
    <property type="entry name" value="Methyltransferase, Cobalt-precorrin-4 Transmethylase, Domain 2"/>
    <property type="match status" value="1"/>
</dbReference>
<dbReference type="Gene3D" id="3.40.50.720">
    <property type="entry name" value="NAD(P)-binding Rossmann-like Domain"/>
    <property type="match status" value="1"/>
</dbReference>
<dbReference type="InterPro" id="IPR000878">
    <property type="entry name" value="4pyrrol_Mease"/>
</dbReference>
<dbReference type="InterPro" id="IPR035996">
    <property type="entry name" value="4pyrrol_Methylase_sf"/>
</dbReference>
<dbReference type="InterPro" id="IPR014777">
    <property type="entry name" value="4pyrrole_Mease_sub1"/>
</dbReference>
<dbReference type="InterPro" id="IPR014776">
    <property type="entry name" value="4pyrrole_Mease_sub2"/>
</dbReference>
<dbReference type="InterPro" id="IPR006366">
    <property type="entry name" value="CobA/CysG_C"/>
</dbReference>
<dbReference type="InterPro" id="IPR012066">
    <property type="entry name" value="Met1_fungi"/>
</dbReference>
<dbReference type="InterPro" id="IPR050161">
    <property type="entry name" value="Siro_Cobalamin_biosynth"/>
</dbReference>
<dbReference type="InterPro" id="IPR003043">
    <property type="entry name" value="Uropor_MeTrfase_CS"/>
</dbReference>
<dbReference type="PANTHER" id="PTHR45790">
    <property type="entry name" value="SIROHEME SYNTHASE-RELATED"/>
    <property type="match status" value="1"/>
</dbReference>
<dbReference type="PANTHER" id="PTHR45790:SF6">
    <property type="entry name" value="UROPORPHYRINOGEN-III C-METHYLTRANSFERASE"/>
    <property type="match status" value="1"/>
</dbReference>
<dbReference type="Pfam" id="PF00590">
    <property type="entry name" value="TP_methylase"/>
    <property type="match status" value="1"/>
</dbReference>
<dbReference type="PIRSF" id="PIRSF036555">
    <property type="entry name" value="SUMT_yeast"/>
    <property type="match status" value="1"/>
</dbReference>
<dbReference type="SUPFAM" id="SSF75615">
    <property type="entry name" value="Siroheme synthase middle domains-like"/>
    <property type="match status" value="1"/>
</dbReference>
<dbReference type="SUPFAM" id="SSF53790">
    <property type="entry name" value="Tetrapyrrole methylase"/>
    <property type="match status" value="1"/>
</dbReference>
<dbReference type="PROSITE" id="PS00839">
    <property type="entry name" value="SUMT_1"/>
    <property type="match status" value="1"/>
</dbReference>
<dbReference type="PROSITE" id="PS00840">
    <property type="entry name" value="SUMT_2"/>
    <property type="match status" value="1"/>
</dbReference>
<feature type="chain" id="PRO_0000150387" description="Uroporphyrinogen-III C-methyltransferase">
    <location>
        <begin position="1"/>
        <end position="593"/>
    </location>
</feature>
<feature type="region of interest" description="Disordered" evidence="1">
    <location>
        <begin position="278"/>
        <end position="303"/>
    </location>
</feature>
<proteinExistence type="evidence at protein level"/>
<gene>
    <name evidence="4" type="primary">MET1</name>
    <name type="synonym">MET20</name>
    <name type="ordered locus">YKR069W</name>
</gene>
<name>SUMT_YEAST</name>